<sequence>MITLTHVLGSDIPHHNLTVLRFFNDVLAKCLPVEQVRHFMVAAKETAPFSSFPQLDIDTYSDKKALAEAVIARAQADRSARFFWHGQFNATLWLALLSGKIKPGQVYWHVWGADLYEDAKSLKFRLFYLLRRIAQGRVGHVFATRGDLIHYQQRHPRVPASLLYFPTRMDPALTAINIDKPLAGPMTILVGNSGDTTNRHIEALKAIHQQFGPDVRVILPMGYPANNEAYIEQVRQAGLALFSQDNLRILTEQIPFDDYLNILRECDLGYFIFNRQQGIGTLCLLTQFGVPFVLSRKNPFWQDLAEQHIPVFFYGDTLDEPLIREAQRQLAGLDKQAIAFFNPNYIEGWKQALALAAGEHP</sequence>
<name>WECF_YERP3</name>
<gene>
    <name evidence="1" type="primary">wecF</name>
    <name evidence="1" type="synonym">rffT</name>
    <name type="ordered locus">YpsIP31758_0191</name>
</gene>
<organism>
    <name type="scientific">Yersinia pseudotuberculosis serotype O:1b (strain IP 31758)</name>
    <dbReference type="NCBI Taxonomy" id="349747"/>
    <lineage>
        <taxon>Bacteria</taxon>
        <taxon>Pseudomonadati</taxon>
        <taxon>Pseudomonadota</taxon>
        <taxon>Gammaproteobacteria</taxon>
        <taxon>Enterobacterales</taxon>
        <taxon>Yersiniaceae</taxon>
        <taxon>Yersinia</taxon>
    </lineage>
</organism>
<feature type="chain" id="PRO_1000062751" description="TDP-N-acetylfucosamine:lipid II N-acetylfucosaminyltransferase">
    <location>
        <begin position="1"/>
        <end position="361"/>
    </location>
</feature>
<keyword id="KW-0997">Cell inner membrane</keyword>
<keyword id="KW-1003">Cell membrane</keyword>
<keyword id="KW-0328">Glycosyltransferase</keyword>
<keyword id="KW-0472">Membrane</keyword>
<keyword id="KW-0808">Transferase</keyword>
<comment type="function">
    <text evidence="1">Catalyzes the synthesis of Und-PP-GlcNAc-ManNAcA-Fuc4NAc (Lipid III), the third lipid-linked intermediate involved in ECA synthesis.</text>
</comment>
<comment type="catalytic activity">
    <reaction evidence="1">
        <text>beta-D-ManNAcA-(1-&gt;4)-alpha-D-GlcNAc-di-trans,octa-cis-undecaprenyl diphosphate + dTDP-4-acetamido-4,6-dideoxy-alpha-D-galactose = alpha-D-FucNAc4-(1-&gt;4)-beta-D-ManNAcA-(1-&gt;4)-D-GlcNAc-undecaprenyl diphosphate + dTDP + H(+)</text>
        <dbReference type="Rhea" id="RHEA:28759"/>
        <dbReference type="ChEBI" id="CHEBI:15378"/>
        <dbReference type="ChEBI" id="CHEBI:58369"/>
        <dbReference type="ChEBI" id="CHEBI:61495"/>
        <dbReference type="ChEBI" id="CHEBI:61496"/>
        <dbReference type="ChEBI" id="CHEBI:68493"/>
        <dbReference type="EC" id="2.4.1.325"/>
    </reaction>
</comment>
<comment type="pathway">
    <text evidence="1">Bacterial outer membrane biogenesis; enterobacterial common antigen biosynthesis.</text>
</comment>
<comment type="subcellular location">
    <subcellularLocation>
        <location evidence="1">Cell inner membrane</location>
        <topology evidence="1">Peripheral membrane protein</topology>
    </subcellularLocation>
</comment>
<comment type="similarity">
    <text evidence="1">Belongs to the glycosyltransferase 56 family.</text>
</comment>
<proteinExistence type="inferred from homology"/>
<dbReference type="EC" id="2.4.1.325" evidence="1"/>
<dbReference type="EMBL" id="CP000720">
    <property type="protein sequence ID" value="ABS49239.1"/>
    <property type="molecule type" value="Genomic_DNA"/>
</dbReference>
<dbReference type="RefSeq" id="WP_012104300.1">
    <property type="nucleotide sequence ID" value="NC_009708.1"/>
</dbReference>
<dbReference type="SMR" id="A7FD60"/>
<dbReference type="CAZy" id="GT56">
    <property type="family name" value="Glycosyltransferase Family 56"/>
</dbReference>
<dbReference type="KEGG" id="ypi:YpsIP31758_0191"/>
<dbReference type="HOGENOM" id="CLU_066584_0_0_6"/>
<dbReference type="UniPathway" id="UPA00566"/>
<dbReference type="Proteomes" id="UP000002412">
    <property type="component" value="Chromosome"/>
</dbReference>
<dbReference type="GO" id="GO:0005886">
    <property type="term" value="C:plasma membrane"/>
    <property type="evidence" value="ECO:0007669"/>
    <property type="project" value="UniProtKB-SubCell"/>
</dbReference>
<dbReference type="GO" id="GO:0102031">
    <property type="term" value="F:4-acetamido-4,6-dideoxy-D-galactose transferase activity"/>
    <property type="evidence" value="ECO:0007669"/>
    <property type="project" value="UniProtKB-EC"/>
</dbReference>
<dbReference type="GO" id="GO:0008417">
    <property type="term" value="F:fucosyltransferase activity"/>
    <property type="evidence" value="ECO:0007669"/>
    <property type="project" value="InterPro"/>
</dbReference>
<dbReference type="GO" id="GO:0009246">
    <property type="term" value="P:enterobacterial common antigen biosynthetic process"/>
    <property type="evidence" value="ECO:0007669"/>
    <property type="project" value="UniProtKB-UniRule"/>
</dbReference>
<dbReference type="GO" id="GO:0036065">
    <property type="term" value="P:fucosylation"/>
    <property type="evidence" value="ECO:0007669"/>
    <property type="project" value="InterPro"/>
</dbReference>
<dbReference type="HAMAP" id="MF_01002">
    <property type="entry name" value="WecF_RffT"/>
    <property type="match status" value="1"/>
</dbReference>
<dbReference type="InterPro" id="IPR009993">
    <property type="entry name" value="WecF"/>
</dbReference>
<dbReference type="NCBIfam" id="NF002753">
    <property type="entry name" value="PRK02797.1-2"/>
    <property type="match status" value="1"/>
</dbReference>
<dbReference type="Pfam" id="PF07429">
    <property type="entry name" value="Glyco_transf_56"/>
    <property type="match status" value="1"/>
</dbReference>
<protein>
    <recommendedName>
        <fullName evidence="1">TDP-N-acetylfucosamine:lipid II N-acetylfucosaminyltransferase</fullName>
        <ecNumber evidence="1">2.4.1.325</ecNumber>
    </recommendedName>
    <alternativeName>
        <fullName evidence="1">4-alpha-L-fucosyltransferase</fullName>
    </alternativeName>
    <alternativeName>
        <fullName evidence="1">TDP-Fuc4NAc:lipid II Fuc4NAc transferase</fullName>
        <shortName evidence="1">Fuc4NAc transferase</shortName>
    </alternativeName>
</protein>
<reference key="1">
    <citation type="journal article" date="2007" name="PLoS Genet.">
        <title>The complete genome sequence of Yersinia pseudotuberculosis IP31758, the causative agent of Far East scarlet-like fever.</title>
        <authorList>
            <person name="Eppinger M."/>
            <person name="Rosovitz M.J."/>
            <person name="Fricke W.F."/>
            <person name="Rasko D.A."/>
            <person name="Kokorina G."/>
            <person name="Fayolle C."/>
            <person name="Lindler L.E."/>
            <person name="Carniel E."/>
            <person name="Ravel J."/>
        </authorList>
    </citation>
    <scope>NUCLEOTIDE SEQUENCE [LARGE SCALE GENOMIC DNA]</scope>
    <source>
        <strain>IP 31758</strain>
    </source>
</reference>
<accession>A7FD60</accession>
<evidence type="ECO:0000255" key="1">
    <source>
        <dbReference type="HAMAP-Rule" id="MF_01002"/>
    </source>
</evidence>